<proteinExistence type="inferred from homology"/>
<comment type="catalytic activity">
    <reaction evidence="1">
        <text>L-methionyl-[protein] + [thioredoxin]-disulfide + H2O = L-methionyl-(R)-S-oxide-[protein] + [thioredoxin]-dithiol</text>
        <dbReference type="Rhea" id="RHEA:24164"/>
        <dbReference type="Rhea" id="RHEA-COMP:10698"/>
        <dbReference type="Rhea" id="RHEA-COMP:10700"/>
        <dbReference type="Rhea" id="RHEA-COMP:12313"/>
        <dbReference type="Rhea" id="RHEA-COMP:12314"/>
        <dbReference type="ChEBI" id="CHEBI:15377"/>
        <dbReference type="ChEBI" id="CHEBI:16044"/>
        <dbReference type="ChEBI" id="CHEBI:29950"/>
        <dbReference type="ChEBI" id="CHEBI:45764"/>
        <dbReference type="ChEBI" id="CHEBI:50058"/>
        <dbReference type="EC" id="1.8.4.12"/>
    </reaction>
</comment>
<comment type="similarity">
    <text evidence="1">Belongs to the MsrB Met sulfoxide reductase family.</text>
</comment>
<reference key="1">
    <citation type="journal article" date="1999" name="J. Bacteriol.">
        <title>Gene duplication and multiplicity of collagenases in Clostridium histolyticum.</title>
        <authorList>
            <person name="Matsushita O."/>
            <person name="Jung C.-M."/>
            <person name="Katayama S."/>
            <person name="Minami J."/>
            <person name="Takahashi Y."/>
            <person name="Okabe A."/>
        </authorList>
    </citation>
    <scope>NUCLEOTIDE SEQUENCE [GENOMIC DNA]</scope>
    <source>
        <strain>ATCC 19401 / DSM 2158 / JCM 1403 / NCIMB 503 / NCTC 503</strain>
    </source>
</reference>
<feature type="chain" id="PRO_0000140268" description="Peptide methionine sulfoxide reductase MsrB">
    <location>
        <begin position="1"/>
        <end position="159"/>
    </location>
</feature>
<feature type="domain" description="MsrB" evidence="2">
    <location>
        <begin position="14"/>
        <end position="137"/>
    </location>
</feature>
<feature type="active site" description="Nucleophile" evidence="2">
    <location>
        <position position="126"/>
    </location>
</feature>
<evidence type="ECO:0000255" key="1">
    <source>
        <dbReference type="HAMAP-Rule" id="MF_01400"/>
    </source>
</evidence>
<evidence type="ECO:0000255" key="2">
    <source>
        <dbReference type="PROSITE-ProRule" id="PRU01126"/>
    </source>
</evidence>
<accession>Q9ZNJ9</accession>
<name>MSRB_HATHI</name>
<keyword id="KW-0560">Oxidoreductase</keyword>
<sequence length="159" mass="18531">MNHKKEKEYKKLDTEKLKENLTELQYNVTQRNATEKPFLNKYDKHFEDGIYVDIVSGEPLFLSIDKFNSGCGWPAFSKPISRKYIKERADFSHGMSRIEVRSKNADSHLGHVFNDGPIENGGMRYCINSASLKFIAKDKLKEEGYEEFLPLFEKDKQEL</sequence>
<organism>
    <name type="scientific">Hathewaya histolytica</name>
    <name type="common">Clostridium histolyticum</name>
    <dbReference type="NCBI Taxonomy" id="1498"/>
    <lineage>
        <taxon>Bacteria</taxon>
        <taxon>Bacillati</taxon>
        <taxon>Bacillota</taxon>
        <taxon>Clostridia</taxon>
        <taxon>Eubacteriales</taxon>
        <taxon>Clostridiaceae</taxon>
        <taxon>Hathewaya</taxon>
    </lineage>
</organism>
<protein>
    <recommendedName>
        <fullName evidence="1">Peptide methionine sulfoxide reductase MsrB</fullName>
        <ecNumber evidence="1">1.8.4.12</ecNumber>
    </recommendedName>
    <alternativeName>
        <fullName evidence="1">Peptide-methionine (R)-S-oxide reductase</fullName>
    </alternativeName>
</protein>
<gene>
    <name evidence="1" type="primary">msrB</name>
</gene>
<dbReference type="EC" id="1.8.4.12" evidence="1"/>
<dbReference type="EMBL" id="AB014075">
    <property type="protein sequence ID" value="BAA34541.1"/>
    <property type="molecule type" value="Genomic_DNA"/>
</dbReference>
<dbReference type="PIR" id="T44354">
    <property type="entry name" value="T44354"/>
</dbReference>
<dbReference type="RefSeq" id="WP_138210553.1">
    <property type="nucleotide sequence ID" value="NZ_CBCRUQ010000003.1"/>
</dbReference>
<dbReference type="SMR" id="Q9ZNJ9"/>
<dbReference type="OrthoDB" id="4174719at2"/>
<dbReference type="GO" id="GO:0005737">
    <property type="term" value="C:cytoplasm"/>
    <property type="evidence" value="ECO:0007669"/>
    <property type="project" value="TreeGrafter"/>
</dbReference>
<dbReference type="GO" id="GO:0033743">
    <property type="term" value="F:peptide-methionine (R)-S-oxide reductase activity"/>
    <property type="evidence" value="ECO:0007669"/>
    <property type="project" value="UniProtKB-UniRule"/>
</dbReference>
<dbReference type="GO" id="GO:0030091">
    <property type="term" value="P:protein repair"/>
    <property type="evidence" value="ECO:0007669"/>
    <property type="project" value="InterPro"/>
</dbReference>
<dbReference type="GO" id="GO:0006979">
    <property type="term" value="P:response to oxidative stress"/>
    <property type="evidence" value="ECO:0007669"/>
    <property type="project" value="InterPro"/>
</dbReference>
<dbReference type="FunFam" id="2.170.150.20:FF:000003">
    <property type="entry name" value="Peptide methionine sulfoxide reductase MsrB"/>
    <property type="match status" value="1"/>
</dbReference>
<dbReference type="Gene3D" id="2.170.150.20">
    <property type="entry name" value="Peptide methionine sulfoxide reductase"/>
    <property type="match status" value="1"/>
</dbReference>
<dbReference type="HAMAP" id="MF_01400">
    <property type="entry name" value="MsrB"/>
    <property type="match status" value="1"/>
</dbReference>
<dbReference type="InterPro" id="IPR028427">
    <property type="entry name" value="Met_Sox_Rdtase_MsrB"/>
</dbReference>
<dbReference type="InterPro" id="IPR002579">
    <property type="entry name" value="Met_Sox_Rdtase_MsrB_dom"/>
</dbReference>
<dbReference type="InterPro" id="IPR011057">
    <property type="entry name" value="Mss4-like_sf"/>
</dbReference>
<dbReference type="NCBIfam" id="TIGR00357">
    <property type="entry name" value="peptide-methionine (R)-S-oxide reductase MsrB"/>
    <property type="match status" value="1"/>
</dbReference>
<dbReference type="PANTHER" id="PTHR10173">
    <property type="entry name" value="METHIONINE SULFOXIDE REDUCTASE"/>
    <property type="match status" value="1"/>
</dbReference>
<dbReference type="PANTHER" id="PTHR10173:SF59">
    <property type="entry name" value="PEPTIDE METHIONINE SULFOXIDE REDUCTASE MSRA_MSRB"/>
    <property type="match status" value="1"/>
</dbReference>
<dbReference type="Pfam" id="PF01641">
    <property type="entry name" value="SelR"/>
    <property type="match status" value="1"/>
</dbReference>
<dbReference type="SUPFAM" id="SSF51316">
    <property type="entry name" value="Mss4-like"/>
    <property type="match status" value="1"/>
</dbReference>
<dbReference type="PROSITE" id="PS51790">
    <property type="entry name" value="MSRB"/>
    <property type="match status" value="1"/>
</dbReference>